<feature type="chain" id="PRO_0000132818" description="Primase-associated factor LEF-2">
    <location>
        <begin position="1"/>
        <end position="210"/>
    </location>
</feature>
<proteinExistence type="evidence at protein level"/>
<dbReference type="EMBL" id="M75679">
    <property type="status" value="NOT_ANNOTATED_CDS"/>
    <property type="molecule type" value="Genomic_DNA"/>
</dbReference>
<dbReference type="EMBL" id="L22858">
    <property type="protein sequence ID" value="AAA66636.1"/>
    <property type="molecule type" value="Genomic_DNA"/>
</dbReference>
<dbReference type="PIR" id="F72850">
    <property type="entry name" value="F72850"/>
</dbReference>
<dbReference type="KEGG" id="vg:1403838"/>
<dbReference type="OrthoDB" id="19212at10239"/>
<dbReference type="Proteomes" id="UP000008292">
    <property type="component" value="Segment"/>
</dbReference>
<dbReference type="GO" id="GO:0030430">
    <property type="term" value="C:host cell cytoplasm"/>
    <property type="evidence" value="ECO:0000314"/>
    <property type="project" value="UniProtKB"/>
</dbReference>
<dbReference type="GO" id="GO:0042025">
    <property type="term" value="C:host cell nucleus"/>
    <property type="evidence" value="ECO:0000314"/>
    <property type="project" value="UniProtKB"/>
</dbReference>
<dbReference type="GO" id="GO:0019028">
    <property type="term" value="C:viral capsid"/>
    <property type="evidence" value="ECO:0007669"/>
    <property type="project" value="UniProtKB-KW"/>
</dbReference>
<dbReference type="GO" id="GO:0039693">
    <property type="term" value="P:viral DNA genome replication"/>
    <property type="evidence" value="ECO:0000314"/>
    <property type="project" value="UniProtKB"/>
</dbReference>
<dbReference type="GO" id="GO:0019079">
    <property type="term" value="P:viral genome replication"/>
    <property type="evidence" value="ECO:0000314"/>
    <property type="project" value="UniProtKB"/>
</dbReference>
<dbReference type="GO" id="GO:0019083">
    <property type="term" value="P:viral transcription"/>
    <property type="evidence" value="ECO:0007669"/>
    <property type="project" value="InterPro"/>
</dbReference>
<dbReference type="InterPro" id="IPR004283">
    <property type="entry name" value="Lef-2"/>
</dbReference>
<dbReference type="Pfam" id="PF03041">
    <property type="entry name" value="Baculo_LEF-2"/>
    <property type="match status" value="1"/>
</dbReference>
<sequence>MANASYNVWSPLIRASCLDKKATYLIDPDDFIDKLTLTPYTVFYNGGVLVKISGLRLYMLLTAPPTINEIKNSNFKKRSKRNICMKECVEGKKNVVDMLNNKINMPPCIKKILNDLKENNVPRGGMYRKRFILNCYIANVVSCAKCENRCLIKALTHFYNHDSKCVGEVMHLLIKSQDVYKPPNCQKMKTVDKLCPFAGNCKGLNPICNY</sequence>
<keyword id="KW-0167">Capsid protein</keyword>
<keyword id="KW-1035">Host cytoplasm</keyword>
<keyword id="KW-1048">Host nucleus</keyword>
<keyword id="KW-1185">Reference proteome</keyword>
<keyword id="KW-0804">Transcription</keyword>
<keyword id="KW-0805">Transcription regulation</keyword>
<keyword id="KW-0946">Virion</keyword>
<comment type="function">
    <text evidence="1 2 3">Plays an essential role in viral DNA replication. Does not seem to participate in the initiation step but is rather important for the amplification of DNA. Also required for expression from the vp39 and polh promoters.</text>
</comment>
<comment type="subunit">
    <text evidence="3">Interacts with the DNA primase.</text>
</comment>
<comment type="subcellular location">
    <subcellularLocation>
        <location evidence="1">Virion</location>
    </subcellularLocation>
    <subcellularLocation>
        <location evidence="1">Host nucleus</location>
    </subcellularLocation>
    <subcellularLocation>
        <location evidence="1">Host cytoplasm</location>
    </subcellularLocation>
    <text evidence="3">Colocalizes with the active viral DNA replication sites in the nucleus of infected cells.</text>
</comment>
<comment type="similarity">
    <text evidence="4">Belongs to the baculoviridae LEF-2 family.</text>
</comment>
<accession>P41418</accession>
<protein>
    <recommendedName>
        <fullName>Primase-associated factor LEF-2</fullName>
    </recommendedName>
</protein>
<gene>
    <name type="primary">LEF-2</name>
    <name type="ORF">ORF6</name>
</gene>
<evidence type="ECO:0000269" key="1">
    <source>
    </source>
</evidence>
<evidence type="ECO:0000269" key="2">
    <source>
    </source>
</evidence>
<evidence type="ECO:0000269" key="3">
    <source>
    </source>
</evidence>
<evidence type="ECO:0000305" key="4"/>
<reference key="1">
    <citation type="journal article" date="1991" name="Virology">
        <title>Nucleotide sequence of the Autographa californica nuclear polyhedrosis 9.4 kbp EcoRI-I and -R (polyhedrin gene) region.</title>
        <authorList>
            <person name="Possee R.D."/>
            <person name="Sun T.P."/>
            <person name="Howard S.C."/>
            <person name="Ayres M.D."/>
            <person name="Hill-Perkins M."/>
            <person name="Gearing K.L."/>
        </authorList>
    </citation>
    <scope>NUCLEOTIDE SEQUENCE [GENOMIC DNA]</scope>
    <source>
        <strain>C6</strain>
    </source>
</reference>
<reference key="2">
    <citation type="journal article" date="1994" name="Virology">
        <title>The complete DNA sequence of Autographa californica nuclear polyhedrosis virus.</title>
        <authorList>
            <person name="Ayres M.D."/>
            <person name="Howard S.C."/>
            <person name="Kuzio J."/>
            <person name="Lopez-Ferber M."/>
            <person name="Possee R.D."/>
        </authorList>
    </citation>
    <scope>NUCLEOTIDE SEQUENCE [LARGE SCALE GENOMIC DNA]</scope>
    <source>
        <strain>C6</strain>
    </source>
</reference>
<reference key="3">
    <citation type="journal article" date="1993" name="J. Virol.">
        <title>Three baculovirus genes involved in late and very late gene expression: ie-1, ie-n, and lef-2.</title>
        <authorList>
            <person name="Passarelli A.L."/>
            <person name="Miller L.K."/>
        </authorList>
    </citation>
    <scope>FUNCTION</scope>
</reference>
<reference key="4">
    <citation type="journal article" date="1997" name="J. Virol.">
        <title>Characterization of the interaction between the baculovirus replication factors LEF-1 and LEF-2.</title>
        <authorList>
            <person name="Evans J.T."/>
            <person name="Leisy D.J."/>
            <person name="Rohrmann G.F."/>
        </authorList>
    </citation>
    <scope>FUNCTION</scope>
    <scope>INTERACTION WITH DNA PRIMASE</scope>
    <scope>SUBCELLULAR LOCATION</scope>
</reference>
<reference key="5">
    <citation type="journal article" date="2010" name="J. Virol.">
        <title>Autographa californica multiple nucleopolyhedrovirus LEF-2 is a capsid protein required for amplification but not initiation of viral DNA replication.</title>
        <authorList>
            <person name="Wu C.P."/>
            <person name="Huang Y.J."/>
            <person name="Wang J.Y."/>
            <person name="Wu Y.L."/>
            <person name="Lo H.R."/>
            <person name="Wang J.C."/>
            <person name="Chao Y.C."/>
        </authorList>
    </citation>
    <scope>FUNCTION</scope>
    <scope>SUBCELLULAR LOCATION</scope>
</reference>
<organism>
    <name type="scientific">Autographa californica nuclear polyhedrosis virus</name>
    <name type="common">AcMNPV</name>
    <dbReference type="NCBI Taxonomy" id="46015"/>
    <lineage>
        <taxon>Viruses</taxon>
        <taxon>Viruses incertae sedis</taxon>
        <taxon>Naldaviricetes</taxon>
        <taxon>Lefavirales</taxon>
        <taxon>Baculoviridae</taxon>
        <taxon>Alphabaculovirus</taxon>
        <taxon>Alphabaculovirus aucalifornicae</taxon>
    </lineage>
</organism>
<name>LEF2_NPVAC</name>
<organismHost>
    <name type="scientific">Lepidoptera</name>
    <name type="common">butterflies and moths</name>
    <dbReference type="NCBI Taxonomy" id="7088"/>
</organismHost>